<organism>
    <name type="scientific">Pinus parviflora</name>
    <name type="common">Japanese white pine</name>
    <name type="synonym">Pinus pentaphylla var. himekomatsu</name>
    <dbReference type="NCBI Taxonomy" id="71644"/>
    <lineage>
        <taxon>Eukaryota</taxon>
        <taxon>Viridiplantae</taxon>
        <taxon>Streptophyta</taxon>
        <taxon>Embryophyta</taxon>
        <taxon>Tracheophyta</taxon>
        <taxon>Spermatophyta</taxon>
        <taxon>Pinopsida</taxon>
        <taxon>Pinidae</taxon>
        <taxon>Conifers I</taxon>
        <taxon>Pinales</taxon>
        <taxon>Pinaceae</taxon>
        <taxon>Pinus</taxon>
        <taxon>Pinus subgen. Strobus</taxon>
    </lineage>
</organism>
<accession>Q8HQR0</accession>
<dbReference type="EMBL" id="AB081086">
    <property type="protein sequence ID" value="BAC15587.1"/>
    <property type="molecule type" value="Genomic_DNA"/>
</dbReference>
<dbReference type="RefSeq" id="YP_009524235.1">
    <property type="nucleotide sequence ID" value="NC_039615.1"/>
</dbReference>
<dbReference type="GeneID" id="38287364"/>
<dbReference type="GO" id="GO:0009507">
    <property type="term" value="C:chloroplast"/>
    <property type="evidence" value="ECO:0007669"/>
    <property type="project" value="UniProtKB-SubCell"/>
</dbReference>
<dbReference type="GO" id="GO:0003723">
    <property type="term" value="F:RNA binding"/>
    <property type="evidence" value="ECO:0007669"/>
    <property type="project" value="UniProtKB-KW"/>
</dbReference>
<dbReference type="GO" id="GO:0006397">
    <property type="term" value="P:mRNA processing"/>
    <property type="evidence" value="ECO:0007669"/>
    <property type="project" value="UniProtKB-KW"/>
</dbReference>
<dbReference type="GO" id="GO:0008380">
    <property type="term" value="P:RNA splicing"/>
    <property type="evidence" value="ECO:0007669"/>
    <property type="project" value="UniProtKB-UniRule"/>
</dbReference>
<dbReference type="GO" id="GO:0008033">
    <property type="term" value="P:tRNA processing"/>
    <property type="evidence" value="ECO:0007669"/>
    <property type="project" value="UniProtKB-KW"/>
</dbReference>
<dbReference type="HAMAP" id="MF_01390">
    <property type="entry name" value="MatK"/>
    <property type="match status" value="1"/>
</dbReference>
<dbReference type="InterPro" id="IPR024937">
    <property type="entry name" value="Domain_X"/>
</dbReference>
<dbReference type="InterPro" id="IPR002866">
    <property type="entry name" value="Maturase_MatK"/>
</dbReference>
<dbReference type="InterPro" id="IPR024942">
    <property type="entry name" value="Maturase_MatK_N"/>
</dbReference>
<dbReference type="PANTHER" id="PTHR34811">
    <property type="entry name" value="MATURASE K"/>
    <property type="match status" value="1"/>
</dbReference>
<dbReference type="PANTHER" id="PTHR34811:SF1">
    <property type="entry name" value="MATURASE K"/>
    <property type="match status" value="1"/>
</dbReference>
<dbReference type="Pfam" id="PF01348">
    <property type="entry name" value="Intron_maturas2"/>
    <property type="match status" value="1"/>
</dbReference>
<dbReference type="Pfam" id="PF01824">
    <property type="entry name" value="MatK_N"/>
    <property type="match status" value="1"/>
</dbReference>
<gene>
    <name evidence="1" type="primary">matK</name>
</gene>
<evidence type="ECO:0000255" key="1">
    <source>
        <dbReference type="HAMAP-Rule" id="MF_01390"/>
    </source>
</evidence>
<name>MATK_PINPR</name>
<keyword id="KW-0150">Chloroplast</keyword>
<keyword id="KW-0507">mRNA processing</keyword>
<keyword id="KW-0934">Plastid</keyword>
<keyword id="KW-0694">RNA-binding</keyword>
<keyword id="KW-0819">tRNA processing</keyword>
<reference key="1">
    <citation type="submission" date="2002-03" db="EMBL/GenBank/DDBJ databases">
        <title>Phylogeny of the North American pines.</title>
        <authorList>
            <person name="Geada Lopez G."/>
            <person name="Kamiya K."/>
            <person name="Harada K."/>
        </authorList>
    </citation>
    <scope>NUCLEOTIDE SEQUENCE [GENOMIC DNA]</scope>
    <source>
        <tissue>Leaf</tissue>
    </source>
</reference>
<protein>
    <recommendedName>
        <fullName evidence="1">Maturase K</fullName>
    </recommendedName>
    <alternativeName>
        <fullName evidence="1">Intron maturase</fullName>
    </alternativeName>
</protein>
<feature type="chain" id="PRO_0000143620" description="Maturase K">
    <location>
        <begin position="1"/>
        <end position="513"/>
    </location>
</feature>
<geneLocation type="chloroplast"/>
<proteinExistence type="inferred from homology"/>
<comment type="function">
    <text evidence="1">Usually encoded in the trnK tRNA gene intron. Probably assists in splicing its own and other chloroplast group II introns.</text>
</comment>
<comment type="subcellular location">
    <subcellularLocation>
        <location>Plastid</location>
        <location>Chloroplast</location>
    </subcellularLocation>
</comment>
<comment type="similarity">
    <text evidence="1">Belongs to the intron maturase 2 family. MatK subfamily.</text>
</comment>
<sequence length="513" mass="60781">MDEFHRYGKEDNSRQQCFLYPLFFQEDLYAISHDHYLDGSSSSEPMEHLSSNDQFSFLTVKRLIGQIRQQNHSIVLFVNCAPNPLADCKKSSYSESVLEGLTLVLEVPFSIRSKYSGMNEWKSFRSIHSIFPFLEDKFPHSNYISDARIPYSIHPEILVRTFRRLIRDAPSLHPLRSVLYEYRNSPENLQRSIIVVPRVNTRFFLFLWNYYVYECESILFSLLKRSSHSRSLSHRPFPQRTHFHRKIKHIIIFSRRNSLKSIWLLKDPKIHYVRYGERSIIAIKGTHLLVKKCRYYLLLFRQCYFHLWSEPYRVCSHQLSKNCSSSPGYFLRVRMNPLFVRTKMLDELFIADLITNEFDPIVPIVPILGLLAREKFCDVSGRPISKLSWTNLTDDDILNRFDQIWRNLFHYYSGSFGRDGLYRIKYILSLSCAKTLACKHKSTIRVVRKELGPELFQKSFSKEREFDSLPFSSKAAARSQRERIWHSDIPQINPLVNSWQKIQDLKIENLFDQ</sequence>